<protein>
    <recommendedName>
        <fullName>Trypsin inhibitor BvTI</fullName>
    </recommendedName>
</protein>
<reference key="1">
    <citation type="journal article" date="2003" name="Curr. Med. Chem.">
        <title>Kinetic characterization of factor Xa binding using a quenched fluorescent substrate based on the reactive site of factor Xa inhibitor from Bauhinia ungulata seeds.</title>
        <authorList>
            <person name="Oliva M.L.V."/>
            <person name="Andrade S.A."/>
            <person name="Juliano M.A."/>
            <person name="Sallai R.C."/>
            <person name="Torquato R.J."/>
            <person name="Sampaio M.U."/>
            <person name="Pott V.J."/>
            <person name="Sampaio C.A.M."/>
        </authorList>
    </citation>
    <scope>PROTEIN SEQUENCE</scope>
    <scope>FUNCTION</scope>
    <source>
        <tissue>Cotyledon</tissue>
    </source>
</reference>
<dbReference type="SMR" id="P83595"/>
<dbReference type="MEROPS" id="I03.027"/>
<dbReference type="GO" id="GO:0005576">
    <property type="term" value="C:extracellular region"/>
    <property type="evidence" value="ECO:0007669"/>
    <property type="project" value="UniProtKB-SubCell"/>
</dbReference>
<dbReference type="GO" id="GO:0004867">
    <property type="term" value="F:serine-type endopeptidase inhibitor activity"/>
    <property type="evidence" value="ECO:0007669"/>
    <property type="project" value="UniProtKB-KW"/>
</dbReference>
<dbReference type="CDD" id="cd23365">
    <property type="entry name" value="beta-trefoil_STI_LlTI-like"/>
    <property type="match status" value="1"/>
</dbReference>
<dbReference type="Gene3D" id="2.80.10.50">
    <property type="match status" value="1"/>
</dbReference>
<dbReference type="InterPro" id="IPR011065">
    <property type="entry name" value="Kunitz_inhibitor_STI-like_sf"/>
</dbReference>
<dbReference type="InterPro" id="IPR002160">
    <property type="entry name" value="Prot_inh_Kunz-lg"/>
</dbReference>
<dbReference type="PANTHER" id="PTHR33107">
    <property type="entry name" value="KUNITZ TRYPSIN INHIBITOR 2"/>
    <property type="match status" value="1"/>
</dbReference>
<dbReference type="PANTHER" id="PTHR33107:SF81">
    <property type="entry name" value="TRYPSIN INHIBITOR A"/>
    <property type="match status" value="1"/>
</dbReference>
<dbReference type="Pfam" id="PF00197">
    <property type="entry name" value="Kunitz_legume"/>
    <property type="match status" value="1"/>
</dbReference>
<dbReference type="PRINTS" id="PR00291">
    <property type="entry name" value="KUNITZINHBTR"/>
</dbReference>
<dbReference type="SMART" id="SM00452">
    <property type="entry name" value="STI"/>
    <property type="match status" value="1"/>
</dbReference>
<dbReference type="SUPFAM" id="SSF50386">
    <property type="entry name" value="STI-like"/>
    <property type="match status" value="1"/>
</dbReference>
<evidence type="ECO:0000250" key="1"/>
<evidence type="ECO:0000269" key="2">
    <source>
    </source>
</evidence>
<evidence type="ECO:0000305" key="3"/>
<sequence length="174" mass="19300">DTLLDTDGEVVRNNGGPYYIIPAFRGNGGGLTLTRVGSETCPRTVVQASSEHSDGLPVVISALPRSLFISTSWRVTIQFVEATCIPKPSFWHIPQDSELEGAVKVGASDERFPLEFRIERVSEDTYKLMHCSSTSDSCRDLGISIDEEGNRRLVVRDENPLLVRFKKANQDSEK</sequence>
<name>ITRY_BAUVA</name>
<proteinExistence type="evidence at protein level"/>
<accession>P83595</accession>
<feature type="chain" id="PRO_0000083297" description="Trypsin inhibitor BvTI">
    <location>
        <begin position="1"/>
        <end position="174"/>
    </location>
</feature>
<feature type="site" description="Reactive bond for factor Xa">
    <location>
        <begin position="65"/>
        <end position="66"/>
    </location>
</feature>
<feature type="disulfide bond" evidence="1">
    <location>
        <begin position="41"/>
        <end position="84"/>
    </location>
</feature>
<feature type="disulfide bond" evidence="1">
    <location>
        <begin position="131"/>
        <end position="138"/>
    </location>
</feature>
<keyword id="KW-0903">Direct protein sequencing</keyword>
<keyword id="KW-1015">Disulfide bond</keyword>
<keyword id="KW-0646">Protease inhibitor</keyword>
<keyword id="KW-0964">Secreted</keyword>
<keyword id="KW-0722">Serine protease inhibitor</keyword>
<organism>
    <name type="scientific">Bauhinia variegata</name>
    <name type="common">Purple orchid tree</name>
    <name type="synonym">Phanera variegata</name>
    <dbReference type="NCBI Taxonomy" id="167791"/>
    <lineage>
        <taxon>Eukaryota</taxon>
        <taxon>Viridiplantae</taxon>
        <taxon>Streptophyta</taxon>
        <taxon>Embryophyta</taxon>
        <taxon>Tracheophyta</taxon>
        <taxon>Spermatophyta</taxon>
        <taxon>Magnoliopsida</taxon>
        <taxon>eudicotyledons</taxon>
        <taxon>Gunneridae</taxon>
        <taxon>Pentapetalae</taxon>
        <taxon>rosids</taxon>
        <taxon>fabids</taxon>
        <taxon>Fabales</taxon>
        <taxon>Fabaceae</taxon>
        <taxon>Cercidoideae</taxon>
        <taxon>Cercideae</taxon>
        <taxon>Bauhiniinae</taxon>
        <taxon>Bauhinia</taxon>
    </lineage>
</organism>
<comment type="function">
    <text evidence="2">Inhibits bovine trypsin and chymotrypsin, and human plasmin, plasma kallikrein and factor XIIa.</text>
</comment>
<comment type="subcellular location">
    <subcellularLocation>
        <location>Secreted</location>
    </subcellularLocation>
</comment>
<comment type="similarity">
    <text evidence="3">Belongs to the protease inhibitor I3 (leguminous Kunitz-type inhibitor) family.</text>
</comment>